<evidence type="ECO:0000255" key="1">
    <source>
        <dbReference type="HAMAP-Rule" id="MF_01318"/>
    </source>
</evidence>
<evidence type="ECO:0000305" key="2"/>
<organism>
    <name type="scientific">Vibrio cholerae serotype O1 (strain ATCC 39541 / Classical Ogawa 395 / O395)</name>
    <dbReference type="NCBI Taxonomy" id="345073"/>
    <lineage>
        <taxon>Bacteria</taxon>
        <taxon>Pseudomonadati</taxon>
        <taxon>Pseudomonadota</taxon>
        <taxon>Gammaproteobacteria</taxon>
        <taxon>Vibrionales</taxon>
        <taxon>Vibrionaceae</taxon>
        <taxon>Vibrio</taxon>
    </lineage>
</organism>
<keyword id="KW-0678">Repressor</keyword>
<keyword id="KW-0687">Ribonucleoprotein</keyword>
<keyword id="KW-0689">Ribosomal protein</keyword>
<keyword id="KW-0694">RNA-binding</keyword>
<keyword id="KW-0699">rRNA-binding</keyword>
<keyword id="KW-0810">Translation regulation</keyword>
<keyword id="KW-0820">tRNA-binding</keyword>
<feature type="chain" id="PRO_1000073224" description="Large ribosomal subunit protein uL1">
    <location>
        <begin position="1"/>
        <end position="233"/>
    </location>
</feature>
<sequence>MAKLTKRMRTIRAKVDVTKEYDINEAVALLKEMATAKFVESVDVAVNLGIDARKSDQNVRGATVLPHGTGRDIRVAVFTQGANAEAAKAAGAELVGMEDLADLVKKGEMNFDVVIASPDAMRVVGQLGTILGPRGLMPNPKVGTVTPNVAEAVKNAKAGQVRYRNDKNGIIHTTIGKVTFEADQLKENLEALLVALKKAKPSSAKGVFVKKVSISTTMGAGVAVDQNTLSAQV</sequence>
<accession>A5F3P2</accession>
<accession>C3M3Y3</accession>
<comment type="function">
    <text evidence="1">Binds directly to 23S rRNA. The L1 stalk is quite mobile in the ribosome, and is involved in E site tRNA release.</text>
</comment>
<comment type="function">
    <text evidence="1">Protein L1 is also a translational repressor protein, it controls the translation of the L11 operon by binding to its mRNA.</text>
</comment>
<comment type="subunit">
    <text evidence="1">Part of the 50S ribosomal subunit.</text>
</comment>
<comment type="similarity">
    <text evidence="1">Belongs to the universal ribosomal protein uL1 family.</text>
</comment>
<gene>
    <name evidence="1" type="primary">rplA</name>
    <name type="ordered locus">VC0395_A2727</name>
    <name type="ordered locus">VC395_0368</name>
</gene>
<protein>
    <recommendedName>
        <fullName evidence="1">Large ribosomal subunit protein uL1</fullName>
    </recommendedName>
    <alternativeName>
        <fullName evidence="2">50S ribosomal protein L1</fullName>
    </alternativeName>
</protein>
<reference key="1">
    <citation type="submission" date="2007-03" db="EMBL/GenBank/DDBJ databases">
        <authorList>
            <person name="Heidelberg J."/>
        </authorList>
    </citation>
    <scope>NUCLEOTIDE SEQUENCE [LARGE SCALE GENOMIC DNA]</scope>
    <source>
        <strain>ATCC 39541 / Classical Ogawa 395 / O395</strain>
    </source>
</reference>
<reference key="2">
    <citation type="journal article" date="2008" name="PLoS ONE">
        <title>A recalibrated molecular clock and independent origins for the cholera pandemic clones.</title>
        <authorList>
            <person name="Feng L."/>
            <person name="Reeves P.R."/>
            <person name="Lan R."/>
            <person name="Ren Y."/>
            <person name="Gao C."/>
            <person name="Zhou Z."/>
            <person name="Ren Y."/>
            <person name="Cheng J."/>
            <person name="Wang W."/>
            <person name="Wang J."/>
            <person name="Qian W."/>
            <person name="Li D."/>
            <person name="Wang L."/>
        </authorList>
    </citation>
    <scope>NUCLEOTIDE SEQUENCE [LARGE SCALE GENOMIC DNA]</scope>
    <source>
        <strain>ATCC 39541 / Classical Ogawa 395 / O395</strain>
    </source>
</reference>
<name>RL1_VIBC3</name>
<dbReference type="EMBL" id="CP000627">
    <property type="protein sequence ID" value="ABQ21716.1"/>
    <property type="molecule type" value="Genomic_DNA"/>
</dbReference>
<dbReference type="EMBL" id="CP001235">
    <property type="protein sequence ID" value="ACP08391.1"/>
    <property type="molecule type" value="Genomic_DNA"/>
</dbReference>
<dbReference type="RefSeq" id="WP_001096673.1">
    <property type="nucleotide sequence ID" value="NZ_JAACZH010000036.1"/>
</dbReference>
<dbReference type="SMR" id="A5F3P2"/>
<dbReference type="KEGG" id="vco:VC0395_A2727"/>
<dbReference type="KEGG" id="vcr:VC395_0368"/>
<dbReference type="PATRIC" id="fig|345073.21.peg.356"/>
<dbReference type="eggNOG" id="COG0081">
    <property type="taxonomic scope" value="Bacteria"/>
</dbReference>
<dbReference type="HOGENOM" id="CLU_062853_0_0_6"/>
<dbReference type="OrthoDB" id="9803740at2"/>
<dbReference type="Proteomes" id="UP000000249">
    <property type="component" value="Chromosome 2"/>
</dbReference>
<dbReference type="GO" id="GO:0022625">
    <property type="term" value="C:cytosolic large ribosomal subunit"/>
    <property type="evidence" value="ECO:0007669"/>
    <property type="project" value="TreeGrafter"/>
</dbReference>
<dbReference type="GO" id="GO:0019843">
    <property type="term" value="F:rRNA binding"/>
    <property type="evidence" value="ECO:0007669"/>
    <property type="project" value="UniProtKB-UniRule"/>
</dbReference>
<dbReference type="GO" id="GO:0003735">
    <property type="term" value="F:structural constituent of ribosome"/>
    <property type="evidence" value="ECO:0007669"/>
    <property type="project" value="InterPro"/>
</dbReference>
<dbReference type="GO" id="GO:0000049">
    <property type="term" value="F:tRNA binding"/>
    <property type="evidence" value="ECO:0007669"/>
    <property type="project" value="UniProtKB-KW"/>
</dbReference>
<dbReference type="GO" id="GO:0006417">
    <property type="term" value="P:regulation of translation"/>
    <property type="evidence" value="ECO:0007669"/>
    <property type="project" value="UniProtKB-KW"/>
</dbReference>
<dbReference type="GO" id="GO:0006412">
    <property type="term" value="P:translation"/>
    <property type="evidence" value="ECO:0007669"/>
    <property type="project" value="UniProtKB-UniRule"/>
</dbReference>
<dbReference type="CDD" id="cd00403">
    <property type="entry name" value="Ribosomal_L1"/>
    <property type="match status" value="1"/>
</dbReference>
<dbReference type="FunFam" id="3.40.50.790:FF:000001">
    <property type="entry name" value="50S ribosomal protein L1"/>
    <property type="match status" value="1"/>
</dbReference>
<dbReference type="Gene3D" id="3.30.190.20">
    <property type="match status" value="1"/>
</dbReference>
<dbReference type="Gene3D" id="3.40.50.790">
    <property type="match status" value="1"/>
</dbReference>
<dbReference type="HAMAP" id="MF_01318_B">
    <property type="entry name" value="Ribosomal_uL1_B"/>
    <property type="match status" value="1"/>
</dbReference>
<dbReference type="InterPro" id="IPR005878">
    <property type="entry name" value="Ribosom_uL1_bac-type"/>
</dbReference>
<dbReference type="InterPro" id="IPR002143">
    <property type="entry name" value="Ribosomal_uL1"/>
</dbReference>
<dbReference type="InterPro" id="IPR023674">
    <property type="entry name" value="Ribosomal_uL1-like"/>
</dbReference>
<dbReference type="InterPro" id="IPR028364">
    <property type="entry name" value="Ribosomal_uL1/biogenesis"/>
</dbReference>
<dbReference type="InterPro" id="IPR016095">
    <property type="entry name" value="Ribosomal_uL1_3-a/b-sand"/>
</dbReference>
<dbReference type="InterPro" id="IPR023673">
    <property type="entry name" value="Ribosomal_uL1_CS"/>
</dbReference>
<dbReference type="NCBIfam" id="TIGR01169">
    <property type="entry name" value="rplA_bact"/>
    <property type="match status" value="1"/>
</dbReference>
<dbReference type="PANTHER" id="PTHR36427">
    <property type="entry name" value="54S RIBOSOMAL PROTEIN L1, MITOCHONDRIAL"/>
    <property type="match status" value="1"/>
</dbReference>
<dbReference type="PANTHER" id="PTHR36427:SF3">
    <property type="entry name" value="LARGE RIBOSOMAL SUBUNIT PROTEIN UL1M"/>
    <property type="match status" value="1"/>
</dbReference>
<dbReference type="Pfam" id="PF00687">
    <property type="entry name" value="Ribosomal_L1"/>
    <property type="match status" value="1"/>
</dbReference>
<dbReference type="PIRSF" id="PIRSF002155">
    <property type="entry name" value="Ribosomal_L1"/>
    <property type="match status" value="1"/>
</dbReference>
<dbReference type="SUPFAM" id="SSF56808">
    <property type="entry name" value="Ribosomal protein L1"/>
    <property type="match status" value="1"/>
</dbReference>
<dbReference type="PROSITE" id="PS01199">
    <property type="entry name" value="RIBOSOMAL_L1"/>
    <property type="match status" value="1"/>
</dbReference>
<proteinExistence type="inferred from homology"/>